<comment type="catalytic activity">
    <reaction>
        <text>tRNA(Phe) + L-phenylalanine + ATP = L-phenylalanyl-tRNA(Phe) + AMP + diphosphate + H(+)</text>
        <dbReference type="Rhea" id="RHEA:19413"/>
        <dbReference type="Rhea" id="RHEA-COMP:9668"/>
        <dbReference type="Rhea" id="RHEA-COMP:9699"/>
        <dbReference type="ChEBI" id="CHEBI:15378"/>
        <dbReference type="ChEBI" id="CHEBI:30616"/>
        <dbReference type="ChEBI" id="CHEBI:33019"/>
        <dbReference type="ChEBI" id="CHEBI:58095"/>
        <dbReference type="ChEBI" id="CHEBI:78442"/>
        <dbReference type="ChEBI" id="CHEBI:78531"/>
        <dbReference type="ChEBI" id="CHEBI:456215"/>
        <dbReference type="EC" id="6.1.1.20"/>
    </reaction>
</comment>
<comment type="cofactor">
    <cofactor evidence="1">
        <name>Mg(2+)</name>
        <dbReference type="ChEBI" id="CHEBI:18420"/>
    </cofactor>
    <text evidence="1">Binds 2 magnesium ions per tetramer.</text>
</comment>
<comment type="subunit">
    <text evidence="1">Tetramer of two alpha and two beta subunits.</text>
</comment>
<comment type="subcellular location">
    <subcellularLocation>
        <location evidence="1">Cytoplasm</location>
    </subcellularLocation>
</comment>
<comment type="similarity">
    <text evidence="2">Belongs to the phenylalanyl-tRNA synthetase beta subunit family. Type 1 subfamily.</text>
</comment>
<dbReference type="EC" id="6.1.1.20"/>
<dbReference type="EMBL" id="AE002098">
    <property type="protein sequence ID" value="AAF41141.1"/>
    <property type="molecule type" value="Genomic_DNA"/>
</dbReference>
<dbReference type="PIR" id="C81166">
    <property type="entry name" value="C81166"/>
</dbReference>
<dbReference type="RefSeq" id="NP_273770.1">
    <property type="nucleotide sequence ID" value="NC_003112.2"/>
</dbReference>
<dbReference type="RefSeq" id="WP_002225459.1">
    <property type="nucleotide sequence ID" value="NC_003112.2"/>
</dbReference>
<dbReference type="SMR" id="Q9K089"/>
<dbReference type="FunCoup" id="Q9K089">
    <property type="interactions" value="446"/>
</dbReference>
<dbReference type="STRING" id="122586.NMB0728"/>
<dbReference type="PaxDb" id="122586-NMB0728"/>
<dbReference type="KEGG" id="nme:NMB0728"/>
<dbReference type="PATRIC" id="fig|122586.8.peg.926"/>
<dbReference type="HOGENOM" id="CLU_016891_0_0_4"/>
<dbReference type="InParanoid" id="Q9K089"/>
<dbReference type="OrthoDB" id="9805455at2"/>
<dbReference type="Proteomes" id="UP000000425">
    <property type="component" value="Chromosome"/>
</dbReference>
<dbReference type="GO" id="GO:0009328">
    <property type="term" value="C:phenylalanine-tRNA ligase complex"/>
    <property type="evidence" value="ECO:0000318"/>
    <property type="project" value="GO_Central"/>
</dbReference>
<dbReference type="GO" id="GO:0005524">
    <property type="term" value="F:ATP binding"/>
    <property type="evidence" value="ECO:0007669"/>
    <property type="project" value="UniProtKB-UniRule"/>
</dbReference>
<dbReference type="GO" id="GO:0000287">
    <property type="term" value="F:magnesium ion binding"/>
    <property type="evidence" value="ECO:0007669"/>
    <property type="project" value="UniProtKB-UniRule"/>
</dbReference>
<dbReference type="GO" id="GO:0004826">
    <property type="term" value="F:phenylalanine-tRNA ligase activity"/>
    <property type="evidence" value="ECO:0007669"/>
    <property type="project" value="UniProtKB-UniRule"/>
</dbReference>
<dbReference type="GO" id="GO:0000049">
    <property type="term" value="F:tRNA binding"/>
    <property type="evidence" value="ECO:0007669"/>
    <property type="project" value="UniProtKB-KW"/>
</dbReference>
<dbReference type="GO" id="GO:0006432">
    <property type="term" value="P:phenylalanyl-tRNA aminoacylation"/>
    <property type="evidence" value="ECO:0000318"/>
    <property type="project" value="GO_Central"/>
</dbReference>
<dbReference type="CDD" id="cd00769">
    <property type="entry name" value="PheRS_beta_core"/>
    <property type="match status" value="1"/>
</dbReference>
<dbReference type="CDD" id="cd02796">
    <property type="entry name" value="tRNA_bind_bactPheRS"/>
    <property type="match status" value="1"/>
</dbReference>
<dbReference type="FunFam" id="2.40.50.140:FF:000045">
    <property type="entry name" value="Phenylalanine--tRNA ligase beta subunit"/>
    <property type="match status" value="1"/>
</dbReference>
<dbReference type="FunFam" id="3.30.56.10:FF:000002">
    <property type="entry name" value="Phenylalanine--tRNA ligase beta subunit"/>
    <property type="match status" value="1"/>
</dbReference>
<dbReference type="FunFam" id="3.30.70.380:FF:000001">
    <property type="entry name" value="Phenylalanine--tRNA ligase beta subunit"/>
    <property type="match status" value="1"/>
</dbReference>
<dbReference type="FunFam" id="3.30.930.10:FF:000022">
    <property type="entry name" value="Phenylalanine--tRNA ligase beta subunit"/>
    <property type="match status" value="1"/>
</dbReference>
<dbReference type="FunFam" id="3.50.40.10:FF:000001">
    <property type="entry name" value="Phenylalanine--tRNA ligase beta subunit"/>
    <property type="match status" value="1"/>
</dbReference>
<dbReference type="Gene3D" id="3.30.56.10">
    <property type="match status" value="2"/>
</dbReference>
<dbReference type="Gene3D" id="3.30.930.10">
    <property type="entry name" value="Bira Bifunctional Protein, Domain 2"/>
    <property type="match status" value="1"/>
</dbReference>
<dbReference type="Gene3D" id="3.30.70.380">
    <property type="entry name" value="Ferrodoxin-fold anticodon-binding domain"/>
    <property type="match status" value="1"/>
</dbReference>
<dbReference type="Gene3D" id="2.40.50.140">
    <property type="entry name" value="Nucleic acid-binding proteins"/>
    <property type="match status" value="1"/>
</dbReference>
<dbReference type="Gene3D" id="3.50.40.10">
    <property type="entry name" value="Phenylalanyl-trna Synthetase, Chain B, domain 3"/>
    <property type="match status" value="1"/>
</dbReference>
<dbReference type="HAMAP" id="MF_00283">
    <property type="entry name" value="Phe_tRNA_synth_beta1"/>
    <property type="match status" value="1"/>
</dbReference>
<dbReference type="InterPro" id="IPR045864">
    <property type="entry name" value="aa-tRNA-synth_II/BPL/LPL"/>
</dbReference>
<dbReference type="InterPro" id="IPR005146">
    <property type="entry name" value="B3/B4_tRNA-bd"/>
</dbReference>
<dbReference type="InterPro" id="IPR009061">
    <property type="entry name" value="DNA-bd_dom_put_sf"/>
</dbReference>
<dbReference type="InterPro" id="IPR005121">
    <property type="entry name" value="Fdx_antiC-bd"/>
</dbReference>
<dbReference type="InterPro" id="IPR036690">
    <property type="entry name" value="Fdx_antiC-bd_sf"/>
</dbReference>
<dbReference type="InterPro" id="IPR012340">
    <property type="entry name" value="NA-bd_OB-fold"/>
</dbReference>
<dbReference type="InterPro" id="IPR045060">
    <property type="entry name" value="Phe-tRNA-ligase_IIc_bsu"/>
</dbReference>
<dbReference type="InterPro" id="IPR004532">
    <property type="entry name" value="Phe-tRNA-ligase_IIc_bsu_bact"/>
</dbReference>
<dbReference type="InterPro" id="IPR020825">
    <property type="entry name" value="Phe-tRNA_synthase-like_B3/B4"/>
</dbReference>
<dbReference type="InterPro" id="IPR041616">
    <property type="entry name" value="PheRS_beta_core"/>
</dbReference>
<dbReference type="InterPro" id="IPR002547">
    <property type="entry name" value="tRNA-bd_dom"/>
</dbReference>
<dbReference type="InterPro" id="IPR033714">
    <property type="entry name" value="tRNA_bind_bactPheRS"/>
</dbReference>
<dbReference type="InterPro" id="IPR005147">
    <property type="entry name" value="tRNA_synthase_B5-dom"/>
</dbReference>
<dbReference type="NCBIfam" id="TIGR00472">
    <property type="entry name" value="pheT_bact"/>
    <property type="match status" value="1"/>
</dbReference>
<dbReference type="NCBIfam" id="NF045760">
    <property type="entry name" value="YtpR"/>
    <property type="match status" value="1"/>
</dbReference>
<dbReference type="PANTHER" id="PTHR10947:SF0">
    <property type="entry name" value="PHENYLALANINE--TRNA LIGASE BETA SUBUNIT"/>
    <property type="match status" value="1"/>
</dbReference>
<dbReference type="PANTHER" id="PTHR10947">
    <property type="entry name" value="PHENYLALANYL-TRNA SYNTHETASE BETA CHAIN AND LEUCINE-RICH REPEAT-CONTAINING PROTEIN 47"/>
    <property type="match status" value="1"/>
</dbReference>
<dbReference type="Pfam" id="PF03483">
    <property type="entry name" value="B3_4"/>
    <property type="match status" value="1"/>
</dbReference>
<dbReference type="Pfam" id="PF03484">
    <property type="entry name" value="B5"/>
    <property type="match status" value="1"/>
</dbReference>
<dbReference type="Pfam" id="PF03147">
    <property type="entry name" value="FDX-ACB"/>
    <property type="match status" value="1"/>
</dbReference>
<dbReference type="Pfam" id="PF01588">
    <property type="entry name" value="tRNA_bind"/>
    <property type="match status" value="1"/>
</dbReference>
<dbReference type="Pfam" id="PF17759">
    <property type="entry name" value="tRNA_synthFbeta"/>
    <property type="match status" value="1"/>
</dbReference>
<dbReference type="SMART" id="SM00873">
    <property type="entry name" value="B3_4"/>
    <property type="match status" value="1"/>
</dbReference>
<dbReference type="SMART" id="SM00874">
    <property type="entry name" value="B5"/>
    <property type="match status" value="1"/>
</dbReference>
<dbReference type="SMART" id="SM00896">
    <property type="entry name" value="FDX-ACB"/>
    <property type="match status" value="1"/>
</dbReference>
<dbReference type="SUPFAM" id="SSF54991">
    <property type="entry name" value="Anticodon-binding domain of PheRS"/>
    <property type="match status" value="1"/>
</dbReference>
<dbReference type="SUPFAM" id="SSF55681">
    <property type="entry name" value="Class II aaRS and biotin synthetases"/>
    <property type="match status" value="1"/>
</dbReference>
<dbReference type="SUPFAM" id="SSF50249">
    <property type="entry name" value="Nucleic acid-binding proteins"/>
    <property type="match status" value="1"/>
</dbReference>
<dbReference type="SUPFAM" id="SSF56037">
    <property type="entry name" value="PheT/TilS domain"/>
    <property type="match status" value="1"/>
</dbReference>
<dbReference type="SUPFAM" id="SSF46955">
    <property type="entry name" value="Putative DNA-binding domain"/>
    <property type="match status" value="1"/>
</dbReference>
<dbReference type="PROSITE" id="PS51483">
    <property type="entry name" value="B5"/>
    <property type="match status" value="1"/>
</dbReference>
<dbReference type="PROSITE" id="PS51447">
    <property type="entry name" value="FDX_ACB"/>
    <property type="match status" value="1"/>
</dbReference>
<dbReference type="PROSITE" id="PS50886">
    <property type="entry name" value="TRBD"/>
    <property type="match status" value="1"/>
</dbReference>
<name>SYFB_NEIMB</name>
<organism>
    <name type="scientific">Neisseria meningitidis serogroup B (strain ATCC BAA-335 / MC58)</name>
    <dbReference type="NCBI Taxonomy" id="122586"/>
    <lineage>
        <taxon>Bacteria</taxon>
        <taxon>Pseudomonadati</taxon>
        <taxon>Pseudomonadota</taxon>
        <taxon>Betaproteobacteria</taxon>
        <taxon>Neisseriales</taxon>
        <taxon>Neisseriaceae</taxon>
        <taxon>Neisseria</taxon>
    </lineage>
</organism>
<accession>Q9K089</accession>
<protein>
    <recommendedName>
        <fullName>Phenylalanine--tRNA ligase beta subunit</fullName>
        <ecNumber>6.1.1.20</ecNumber>
    </recommendedName>
    <alternativeName>
        <fullName>Phenylalanyl-tRNA synthetase beta subunit</fullName>
        <shortName>PheRS</shortName>
    </alternativeName>
</protein>
<sequence>MQFSYSWLKTQADTELSSDKLEHLLTMSGLEVEEAETAAPAFAGVVIAEVKSVEKHPDADRLNVTRVDAGTGGLVQIVCGAPNVKAGIKVPCSLPGAVLPGNFKIKPTKMRGEVSDGMLCSTDELGLPDDGVNGLHILPEDAPVGTNIREYLDLDDTLFTLKITPNRADCLSIKGIAREVSALTGCAFRQPEIHTAPITGSRKQPVQINAPADCGRFISRVIENVNARATTPDWMKQRLERSGIRSISALVDIGNYVMLEIGQPMHVFDADKLSGSLHIRRAREGETLECLNEKTVSLSENTLVVADEKGVLSLAGLMGGAASAVSDGTQNIVLEAAWFAPEIIAGKSRQYGFGSDSSFRFERGVDYRLQADAIERATELVLQICGGAAGEMVEAQGELPEAKQVGLRLDRLKTVLGVDIPAEQVETILQHLGLQPEKTAEGFRVTAPSFRFDIEIEADLIEEIGRVYGYENIPDDYTSGRLKMLELPETRRPRFAVYNEMAARGYREVVSYAFVDEQWEQDFAANADPIRLQNPLAAQYAVMRSTLIGGLVEILQNNLNRKQNRVCVFEIARVFSKGSDGQFVQNERIGGLWYGAVMPEQWGGKTRNADFYDIKADVENLLKNKAVEFVKTGHPALHPGRAANIVSDGKVIGFVGELHPKWLQKYDLPQAPLVFEIDMAAVLECGKTRYRVVSKFQPVRRDLAFVMPEAMSHDDLLLVLKGAANKLVQEISVFDVYRGTGLPEGMKSVAVKVILQDMENTLTDEAVEPLIGKLIGAATAAGARLRS</sequence>
<keyword id="KW-0030">Aminoacyl-tRNA synthetase</keyword>
<keyword id="KW-0067">ATP-binding</keyword>
<keyword id="KW-0963">Cytoplasm</keyword>
<keyword id="KW-0436">Ligase</keyword>
<keyword id="KW-0460">Magnesium</keyword>
<keyword id="KW-0479">Metal-binding</keyword>
<keyword id="KW-0547">Nucleotide-binding</keyword>
<keyword id="KW-0648">Protein biosynthesis</keyword>
<keyword id="KW-1185">Reference proteome</keyword>
<keyword id="KW-0694">RNA-binding</keyword>
<keyword id="KW-0820">tRNA-binding</keyword>
<proteinExistence type="inferred from homology"/>
<gene>
    <name type="primary">pheT</name>
    <name type="ordered locus">NMB0728</name>
</gene>
<feature type="chain" id="PRO_0000126919" description="Phenylalanine--tRNA ligase beta subunit">
    <location>
        <begin position="1"/>
        <end position="787"/>
    </location>
</feature>
<feature type="domain" description="tRNA-binding">
    <location>
        <begin position="39"/>
        <end position="149"/>
    </location>
</feature>
<feature type="domain" description="B5">
    <location>
        <begin position="400"/>
        <end position="475"/>
    </location>
</feature>
<feature type="domain" description="FDX-ACB">
    <location>
        <begin position="694"/>
        <end position="786"/>
    </location>
</feature>
<feature type="binding site" evidence="1">
    <location>
        <position position="453"/>
    </location>
    <ligand>
        <name>Mg(2+)</name>
        <dbReference type="ChEBI" id="CHEBI:18420"/>
        <note>shared with alpha subunit</note>
    </ligand>
</feature>
<feature type="binding site" evidence="1">
    <location>
        <position position="459"/>
    </location>
    <ligand>
        <name>Mg(2+)</name>
        <dbReference type="ChEBI" id="CHEBI:18420"/>
        <note>shared with alpha subunit</note>
    </ligand>
</feature>
<feature type="binding site" evidence="1">
    <location>
        <position position="462"/>
    </location>
    <ligand>
        <name>Mg(2+)</name>
        <dbReference type="ChEBI" id="CHEBI:18420"/>
        <note>shared with alpha subunit</note>
    </ligand>
</feature>
<feature type="binding site" evidence="1">
    <location>
        <position position="463"/>
    </location>
    <ligand>
        <name>Mg(2+)</name>
        <dbReference type="ChEBI" id="CHEBI:18420"/>
        <note>shared with alpha subunit</note>
    </ligand>
</feature>
<reference key="1">
    <citation type="journal article" date="2000" name="Science">
        <title>Complete genome sequence of Neisseria meningitidis serogroup B strain MC58.</title>
        <authorList>
            <person name="Tettelin H."/>
            <person name="Saunders N.J."/>
            <person name="Heidelberg J.F."/>
            <person name="Jeffries A.C."/>
            <person name="Nelson K.E."/>
            <person name="Eisen J.A."/>
            <person name="Ketchum K.A."/>
            <person name="Hood D.W."/>
            <person name="Peden J.F."/>
            <person name="Dodson R.J."/>
            <person name="Nelson W.C."/>
            <person name="Gwinn M.L."/>
            <person name="DeBoy R.T."/>
            <person name="Peterson J.D."/>
            <person name="Hickey E.K."/>
            <person name="Haft D.H."/>
            <person name="Salzberg S.L."/>
            <person name="White O."/>
            <person name="Fleischmann R.D."/>
            <person name="Dougherty B.A."/>
            <person name="Mason T.M."/>
            <person name="Ciecko A."/>
            <person name="Parksey D.S."/>
            <person name="Blair E."/>
            <person name="Cittone H."/>
            <person name="Clark E.B."/>
            <person name="Cotton M.D."/>
            <person name="Utterback T.R."/>
            <person name="Khouri H.M."/>
            <person name="Qin H."/>
            <person name="Vamathevan J.J."/>
            <person name="Gill J."/>
            <person name="Scarlato V."/>
            <person name="Masignani V."/>
            <person name="Pizza M."/>
            <person name="Grandi G."/>
            <person name="Sun L."/>
            <person name="Smith H.O."/>
            <person name="Fraser C.M."/>
            <person name="Moxon E.R."/>
            <person name="Rappuoli R."/>
            <person name="Venter J.C."/>
        </authorList>
    </citation>
    <scope>NUCLEOTIDE SEQUENCE [LARGE SCALE GENOMIC DNA]</scope>
    <source>
        <strain>ATCC BAA-335 / MC58</strain>
    </source>
</reference>
<evidence type="ECO:0000250" key="1"/>
<evidence type="ECO:0000305" key="2"/>